<proteinExistence type="inferred from homology"/>
<reference key="1">
    <citation type="journal article" date="2007" name="Nat. Biotechnol.">
        <title>Comparative analysis of the complete genome sequence of the plant growth-promoting bacterium Bacillus amyloliquefaciens FZB42.</title>
        <authorList>
            <person name="Chen X.H."/>
            <person name="Koumoutsi A."/>
            <person name="Scholz R."/>
            <person name="Eisenreich A."/>
            <person name="Schneider K."/>
            <person name="Heinemeyer I."/>
            <person name="Morgenstern B."/>
            <person name="Voss B."/>
            <person name="Hess W.R."/>
            <person name="Reva O."/>
            <person name="Junge H."/>
            <person name="Voigt B."/>
            <person name="Jungblut P.R."/>
            <person name="Vater J."/>
            <person name="Suessmuth R."/>
            <person name="Liesegang H."/>
            <person name="Strittmatter A."/>
            <person name="Gottschalk G."/>
            <person name="Borriss R."/>
        </authorList>
    </citation>
    <scope>NUCLEOTIDE SEQUENCE [LARGE SCALE GENOMIC DNA]</scope>
    <source>
        <strain>DSM 23117 / BGSC 10A6 / LMG 26770 / FZB42</strain>
    </source>
</reference>
<dbReference type="EMBL" id="CP000560">
    <property type="protein sequence ID" value="ABS73505.1"/>
    <property type="molecule type" value="Genomic_DNA"/>
</dbReference>
<dbReference type="RefSeq" id="WP_007409116.1">
    <property type="nucleotide sequence ID" value="NC_009725.2"/>
</dbReference>
<dbReference type="SMR" id="A7Z3C9"/>
<dbReference type="GeneID" id="93080278"/>
<dbReference type="KEGG" id="bay:RBAM_011410"/>
<dbReference type="HOGENOM" id="CLU_1101152_0_0_9"/>
<dbReference type="Proteomes" id="UP000001120">
    <property type="component" value="Chromosome"/>
</dbReference>
<dbReference type="HAMAP" id="MF_01860">
    <property type="entry name" value="UPF0736"/>
    <property type="match status" value="1"/>
</dbReference>
<dbReference type="InterPro" id="IPR020909">
    <property type="entry name" value="UPF0736"/>
</dbReference>
<dbReference type="Pfam" id="PF12227">
    <property type="entry name" value="DUF3603"/>
    <property type="match status" value="1"/>
</dbReference>
<feature type="chain" id="PRO_0000369134" description="UPF0736 protein RBAM_011410">
    <location>
        <begin position="1"/>
        <end position="250"/>
    </location>
</feature>
<sequence length="250" mass="30146">MLFLHDVWVNWFEGEENGYNVCHFHEWRKEDTVELLDQTPLLRVPSVLFHYIENDLSELPKELLDQVHQKSYVRKNHERTKLEYCFVVTDGIGIIAVDTIGYTIPVRKSRLIPRQEQLVYEMVKDVEPESFQFEPAQLESSKEYHILSLAPEHVRGLTRKERQIKQLMFMALDQLKGLKNRAEIVYWYTEWNPHMYEQIKRMSFEEIWDMLYNETIEGWSDKHLAFCENLIKGQPFFEKLWEMEQESKVN</sequence>
<evidence type="ECO:0000255" key="1">
    <source>
        <dbReference type="HAMAP-Rule" id="MF_01860"/>
    </source>
</evidence>
<name>Y1141_BACVZ</name>
<protein>
    <recommendedName>
        <fullName evidence="1">UPF0736 protein RBAM_011410</fullName>
    </recommendedName>
</protein>
<organism>
    <name type="scientific">Bacillus velezensis (strain DSM 23117 / BGSC 10A6 / LMG 26770 / FZB42)</name>
    <name type="common">Bacillus amyloliquefaciens subsp. plantarum</name>
    <dbReference type="NCBI Taxonomy" id="326423"/>
    <lineage>
        <taxon>Bacteria</taxon>
        <taxon>Bacillati</taxon>
        <taxon>Bacillota</taxon>
        <taxon>Bacilli</taxon>
        <taxon>Bacillales</taxon>
        <taxon>Bacillaceae</taxon>
        <taxon>Bacillus</taxon>
        <taxon>Bacillus amyloliquefaciens group</taxon>
    </lineage>
</organism>
<accession>A7Z3C9</accession>
<comment type="similarity">
    <text evidence="1">Belongs to the UPF0736 family.</text>
</comment>
<gene>
    <name type="ordered locus">RBAM_011410</name>
</gene>